<accession>P25994</accession>
<keyword id="KW-0028">Amino-acid biosynthesis</keyword>
<keyword id="KW-0055">Arginine biosynthesis</keyword>
<keyword id="KW-0067">ATP-binding</keyword>
<keyword id="KW-0436">Ligase</keyword>
<keyword id="KW-0460">Magnesium</keyword>
<keyword id="KW-0464">Manganese</keyword>
<keyword id="KW-0479">Metal-binding</keyword>
<keyword id="KW-0547">Nucleotide-binding</keyword>
<keyword id="KW-0665">Pyrimidine biosynthesis</keyword>
<keyword id="KW-1185">Reference proteome</keyword>
<keyword id="KW-0677">Repeat</keyword>
<evidence type="ECO:0000255" key="1">
    <source>
        <dbReference type="HAMAP-Rule" id="MF_01210"/>
    </source>
</evidence>
<evidence type="ECO:0000269" key="2">
    <source>
    </source>
</evidence>
<evidence type="ECO:0000303" key="3">
    <source>
    </source>
</evidence>
<evidence type="ECO:0000305" key="4"/>
<proteinExistence type="evidence at protein level"/>
<gene>
    <name type="primary">pyrAB</name>
    <name type="ordered locus">BSU15520</name>
</gene>
<dbReference type="EC" id="6.3.4.16" evidence="1"/>
<dbReference type="EC" id="6.3.5.5" evidence="1"/>
<dbReference type="EMBL" id="M59757">
    <property type="protein sequence ID" value="AAA21270.1"/>
    <property type="molecule type" value="Genomic_DNA"/>
</dbReference>
<dbReference type="EMBL" id="AL009126">
    <property type="protein sequence ID" value="CAB13426.1"/>
    <property type="molecule type" value="Genomic_DNA"/>
</dbReference>
<dbReference type="PIR" id="F39845">
    <property type="entry name" value="F39845"/>
</dbReference>
<dbReference type="RefSeq" id="NP_389435.1">
    <property type="nucleotide sequence ID" value="NC_000964.3"/>
</dbReference>
<dbReference type="SMR" id="P25994"/>
<dbReference type="FunCoup" id="P25994">
    <property type="interactions" value="683"/>
</dbReference>
<dbReference type="IntAct" id="P25994">
    <property type="interactions" value="1"/>
</dbReference>
<dbReference type="STRING" id="224308.BSU15520"/>
<dbReference type="PaxDb" id="224308-BSU15520"/>
<dbReference type="EnsemblBacteria" id="CAB13426">
    <property type="protein sequence ID" value="CAB13426"/>
    <property type="gene ID" value="BSU_15520"/>
</dbReference>
<dbReference type="GeneID" id="936608"/>
<dbReference type="KEGG" id="bsu:BSU15520"/>
<dbReference type="PATRIC" id="fig|224308.179.peg.1691"/>
<dbReference type="eggNOG" id="COG0458">
    <property type="taxonomic scope" value="Bacteria"/>
</dbReference>
<dbReference type="InParanoid" id="P25994"/>
<dbReference type="OrthoDB" id="9804197at2"/>
<dbReference type="PhylomeDB" id="P25994"/>
<dbReference type="BioCyc" id="BSUB:BSU15520-MONOMER"/>
<dbReference type="BioCyc" id="MetaCyc:BSU15520-MONOMER"/>
<dbReference type="SABIO-RK" id="P25994"/>
<dbReference type="UniPathway" id="UPA00068">
    <property type="reaction ID" value="UER00171"/>
</dbReference>
<dbReference type="UniPathway" id="UPA00070">
    <property type="reaction ID" value="UER00115"/>
</dbReference>
<dbReference type="Proteomes" id="UP000001570">
    <property type="component" value="Chromosome"/>
</dbReference>
<dbReference type="GO" id="GO:0005737">
    <property type="term" value="C:cytoplasm"/>
    <property type="evidence" value="ECO:0000318"/>
    <property type="project" value="GO_Central"/>
</dbReference>
<dbReference type="GO" id="GO:0005524">
    <property type="term" value="F:ATP binding"/>
    <property type="evidence" value="ECO:0007669"/>
    <property type="project" value="UniProtKB-UniRule"/>
</dbReference>
<dbReference type="GO" id="GO:0004087">
    <property type="term" value="F:carbamoyl-phosphate synthase (ammonia) activity"/>
    <property type="evidence" value="ECO:0007669"/>
    <property type="project" value="RHEA"/>
</dbReference>
<dbReference type="GO" id="GO:0004088">
    <property type="term" value="F:carbamoyl-phosphate synthase (glutamine-hydrolyzing) activity"/>
    <property type="evidence" value="ECO:0007669"/>
    <property type="project" value="UniProtKB-UniRule"/>
</dbReference>
<dbReference type="GO" id="GO:0046872">
    <property type="term" value="F:metal ion binding"/>
    <property type="evidence" value="ECO:0007669"/>
    <property type="project" value="UniProtKB-KW"/>
</dbReference>
<dbReference type="GO" id="GO:0044205">
    <property type="term" value="P:'de novo' UMP biosynthetic process"/>
    <property type="evidence" value="ECO:0007669"/>
    <property type="project" value="UniProtKB-UniRule"/>
</dbReference>
<dbReference type="GO" id="GO:0006541">
    <property type="term" value="P:glutamine metabolic process"/>
    <property type="evidence" value="ECO:0000318"/>
    <property type="project" value="GO_Central"/>
</dbReference>
<dbReference type="GO" id="GO:0006526">
    <property type="term" value="P:L-arginine biosynthetic process"/>
    <property type="evidence" value="ECO:0007669"/>
    <property type="project" value="UniProtKB-UniRule"/>
</dbReference>
<dbReference type="CDD" id="cd01424">
    <property type="entry name" value="MGS_CPS_II"/>
    <property type="match status" value="1"/>
</dbReference>
<dbReference type="FunFam" id="1.10.1030.10:FF:000002">
    <property type="entry name" value="Carbamoyl-phosphate synthase large chain"/>
    <property type="match status" value="1"/>
</dbReference>
<dbReference type="FunFam" id="3.30.1490.20:FF:000001">
    <property type="entry name" value="Carbamoyl-phosphate synthase large chain"/>
    <property type="match status" value="1"/>
</dbReference>
<dbReference type="FunFam" id="3.30.470.20:FF:000001">
    <property type="entry name" value="Carbamoyl-phosphate synthase large chain"/>
    <property type="match status" value="1"/>
</dbReference>
<dbReference type="FunFam" id="3.30.470.20:FF:000026">
    <property type="entry name" value="Carbamoyl-phosphate synthase large chain"/>
    <property type="match status" value="1"/>
</dbReference>
<dbReference type="FunFam" id="3.40.50.1380:FF:000011">
    <property type="entry name" value="Carbamoyl-phosphate synthase large chain"/>
    <property type="match status" value="1"/>
</dbReference>
<dbReference type="FunFam" id="3.40.50.20:FF:000001">
    <property type="entry name" value="Carbamoyl-phosphate synthase large chain"/>
    <property type="match status" value="2"/>
</dbReference>
<dbReference type="Gene3D" id="3.40.50.20">
    <property type="match status" value="2"/>
</dbReference>
<dbReference type="Gene3D" id="3.30.1490.20">
    <property type="entry name" value="ATP-grasp fold, A domain"/>
    <property type="match status" value="1"/>
</dbReference>
<dbReference type="Gene3D" id="3.30.470.20">
    <property type="entry name" value="ATP-grasp fold, B domain"/>
    <property type="match status" value="2"/>
</dbReference>
<dbReference type="Gene3D" id="1.10.1030.10">
    <property type="entry name" value="Carbamoyl-phosphate synthetase, large subunit oligomerisation domain"/>
    <property type="match status" value="1"/>
</dbReference>
<dbReference type="Gene3D" id="3.40.50.1380">
    <property type="entry name" value="Methylglyoxal synthase-like domain"/>
    <property type="match status" value="1"/>
</dbReference>
<dbReference type="HAMAP" id="MF_01210_A">
    <property type="entry name" value="CPSase_L_chain_A"/>
    <property type="match status" value="1"/>
</dbReference>
<dbReference type="HAMAP" id="MF_01210_B">
    <property type="entry name" value="CPSase_L_chain_B"/>
    <property type="match status" value="1"/>
</dbReference>
<dbReference type="InterPro" id="IPR011761">
    <property type="entry name" value="ATP-grasp"/>
</dbReference>
<dbReference type="InterPro" id="IPR013815">
    <property type="entry name" value="ATP_grasp_subdomain_1"/>
</dbReference>
<dbReference type="InterPro" id="IPR006275">
    <property type="entry name" value="CarbamoylP_synth_lsu"/>
</dbReference>
<dbReference type="InterPro" id="IPR005480">
    <property type="entry name" value="CarbamoylP_synth_lsu_oligo"/>
</dbReference>
<dbReference type="InterPro" id="IPR036897">
    <property type="entry name" value="CarbamoylP_synth_lsu_oligo_sf"/>
</dbReference>
<dbReference type="InterPro" id="IPR005479">
    <property type="entry name" value="CbamoylP_synth_lsu-like_ATP-bd"/>
</dbReference>
<dbReference type="InterPro" id="IPR005483">
    <property type="entry name" value="CbamoylP_synth_lsu_CPSase_dom"/>
</dbReference>
<dbReference type="InterPro" id="IPR011607">
    <property type="entry name" value="MGS-like_dom"/>
</dbReference>
<dbReference type="InterPro" id="IPR036914">
    <property type="entry name" value="MGS-like_dom_sf"/>
</dbReference>
<dbReference type="InterPro" id="IPR033937">
    <property type="entry name" value="MGS_CPS_CarB"/>
</dbReference>
<dbReference type="InterPro" id="IPR016185">
    <property type="entry name" value="PreATP-grasp_dom_sf"/>
</dbReference>
<dbReference type="NCBIfam" id="TIGR01369">
    <property type="entry name" value="CPSaseII_lrg"/>
    <property type="match status" value="1"/>
</dbReference>
<dbReference type="NCBIfam" id="NF003671">
    <property type="entry name" value="PRK05294.1"/>
    <property type="match status" value="1"/>
</dbReference>
<dbReference type="NCBIfam" id="NF009455">
    <property type="entry name" value="PRK12815.1"/>
    <property type="match status" value="1"/>
</dbReference>
<dbReference type="PANTHER" id="PTHR11405:SF53">
    <property type="entry name" value="CARBAMOYL-PHOSPHATE SYNTHASE [AMMONIA], MITOCHONDRIAL"/>
    <property type="match status" value="1"/>
</dbReference>
<dbReference type="PANTHER" id="PTHR11405">
    <property type="entry name" value="CARBAMOYLTRANSFERASE FAMILY MEMBER"/>
    <property type="match status" value="1"/>
</dbReference>
<dbReference type="Pfam" id="PF02786">
    <property type="entry name" value="CPSase_L_D2"/>
    <property type="match status" value="2"/>
</dbReference>
<dbReference type="Pfam" id="PF02787">
    <property type="entry name" value="CPSase_L_D3"/>
    <property type="match status" value="1"/>
</dbReference>
<dbReference type="Pfam" id="PF02142">
    <property type="entry name" value="MGS"/>
    <property type="match status" value="1"/>
</dbReference>
<dbReference type="PRINTS" id="PR00098">
    <property type="entry name" value="CPSASE"/>
</dbReference>
<dbReference type="SMART" id="SM01096">
    <property type="entry name" value="CPSase_L_D3"/>
    <property type="match status" value="1"/>
</dbReference>
<dbReference type="SMART" id="SM01209">
    <property type="entry name" value="GARS_A"/>
    <property type="match status" value="1"/>
</dbReference>
<dbReference type="SMART" id="SM00851">
    <property type="entry name" value="MGS"/>
    <property type="match status" value="1"/>
</dbReference>
<dbReference type="SUPFAM" id="SSF48108">
    <property type="entry name" value="Carbamoyl phosphate synthetase, large subunit connection domain"/>
    <property type="match status" value="1"/>
</dbReference>
<dbReference type="SUPFAM" id="SSF56059">
    <property type="entry name" value="Glutathione synthetase ATP-binding domain-like"/>
    <property type="match status" value="2"/>
</dbReference>
<dbReference type="SUPFAM" id="SSF52335">
    <property type="entry name" value="Methylglyoxal synthase-like"/>
    <property type="match status" value="1"/>
</dbReference>
<dbReference type="SUPFAM" id="SSF52440">
    <property type="entry name" value="PreATP-grasp domain"/>
    <property type="match status" value="2"/>
</dbReference>
<dbReference type="PROSITE" id="PS50975">
    <property type="entry name" value="ATP_GRASP"/>
    <property type="match status" value="2"/>
</dbReference>
<dbReference type="PROSITE" id="PS00866">
    <property type="entry name" value="CPSASE_1"/>
    <property type="match status" value="2"/>
</dbReference>
<dbReference type="PROSITE" id="PS00867">
    <property type="entry name" value="CPSASE_2"/>
    <property type="match status" value="2"/>
</dbReference>
<dbReference type="PROSITE" id="PS51855">
    <property type="entry name" value="MGS"/>
    <property type="match status" value="1"/>
</dbReference>
<reference key="1">
    <citation type="journal article" date="1991" name="J. Biol. Chem.">
        <title>Functional organization and nucleotide sequence of the Bacillus subtilis pyrimidine biosynthetic operon.</title>
        <authorList>
            <person name="Quinn C.L."/>
            <person name="Stephenson B.T."/>
            <person name="Switzer R.L."/>
        </authorList>
    </citation>
    <scope>NUCLEOTIDE SEQUENCE [GENOMIC DNA]</scope>
</reference>
<reference key="2">
    <citation type="journal article" date="1997" name="Nature">
        <title>The complete genome sequence of the Gram-positive bacterium Bacillus subtilis.</title>
        <authorList>
            <person name="Kunst F."/>
            <person name="Ogasawara N."/>
            <person name="Moszer I."/>
            <person name="Albertini A.M."/>
            <person name="Alloni G."/>
            <person name="Azevedo V."/>
            <person name="Bertero M.G."/>
            <person name="Bessieres P."/>
            <person name="Bolotin A."/>
            <person name="Borchert S."/>
            <person name="Borriss R."/>
            <person name="Boursier L."/>
            <person name="Brans A."/>
            <person name="Braun M."/>
            <person name="Brignell S.C."/>
            <person name="Bron S."/>
            <person name="Brouillet S."/>
            <person name="Bruschi C.V."/>
            <person name="Caldwell B."/>
            <person name="Capuano V."/>
            <person name="Carter N.M."/>
            <person name="Choi S.-K."/>
            <person name="Codani J.-J."/>
            <person name="Connerton I.F."/>
            <person name="Cummings N.J."/>
            <person name="Daniel R.A."/>
            <person name="Denizot F."/>
            <person name="Devine K.M."/>
            <person name="Duesterhoeft A."/>
            <person name="Ehrlich S.D."/>
            <person name="Emmerson P.T."/>
            <person name="Entian K.-D."/>
            <person name="Errington J."/>
            <person name="Fabret C."/>
            <person name="Ferrari E."/>
            <person name="Foulger D."/>
            <person name="Fritz C."/>
            <person name="Fujita M."/>
            <person name="Fujita Y."/>
            <person name="Fuma S."/>
            <person name="Galizzi A."/>
            <person name="Galleron N."/>
            <person name="Ghim S.-Y."/>
            <person name="Glaser P."/>
            <person name="Goffeau A."/>
            <person name="Golightly E.J."/>
            <person name="Grandi G."/>
            <person name="Guiseppi G."/>
            <person name="Guy B.J."/>
            <person name="Haga K."/>
            <person name="Haiech J."/>
            <person name="Harwood C.R."/>
            <person name="Henaut A."/>
            <person name="Hilbert H."/>
            <person name="Holsappel S."/>
            <person name="Hosono S."/>
            <person name="Hullo M.-F."/>
            <person name="Itaya M."/>
            <person name="Jones L.-M."/>
            <person name="Joris B."/>
            <person name="Karamata D."/>
            <person name="Kasahara Y."/>
            <person name="Klaerr-Blanchard M."/>
            <person name="Klein C."/>
            <person name="Kobayashi Y."/>
            <person name="Koetter P."/>
            <person name="Koningstein G."/>
            <person name="Krogh S."/>
            <person name="Kumano M."/>
            <person name="Kurita K."/>
            <person name="Lapidus A."/>
            <person name="Lardinois S."/>
            <person name="Lauber J."/>
            <person name="Lazarevic V."/>
            <person name="Lee S.-M."/>
            <person name="Levine A."/>
            <person name="Liu H."/>
            <person name="Masuda S."/>
            <person name="Mauel C."/>
            <person name="Medigue C."/>
            <person name="Medina N."/>
            <person name="Mellado R.P."/>
            <person name="Mizuno M."/>
            <person name="Moestl D."/>
            <person name="Nakai S."/>
            <person name="Noback M."/>
            <person name="Noone D."/>
            <person name="O'Reilly M."/>
            <person name="Ogawa K."/>
            <person name="Ogiwara A."/>
            <person name="Oudega B."/>
            <person name="Park S.-H."/>
            <person name="Parro V."/>
            <person name="Pohl T.M."/>
            <person name="Portetelle D."/>
            <person name="Porwollik S."/>
            <person name="Prescott A.M."/>
            <person name="Presecan E."/>
            <person name="Pujic P."/>
            <person name="Purnelle B."/>
            <person name="Rapoport G."/>
            <person name="Rey M."/>
            <person name="Reynolds S."/>
            <person name="Rieger M."/>
            <person name="Rivolta C."/>
            <person name="Rocha E."/>
            <person name="Roche B."/>
            <person name="Rose M."/>
            <person name="Sadaie Y."/>
            <person name="Sato T."/>
            <person name="Scanlan E."/>
            <person name="Schleich S."/>
            <person name="Schroeter R."/>
            <person name="Scoffone F."/>
            <person name="Sekiguchi J."/>
            <person name="Sekowska A."/>
            <person name="Seror S.J."/>
            <person name="Serror P."/>
            <person name="Shin B.-S."/>
            <person name="Soldo B."/>
            <person name="Sorokin A."/>
            <person name="Tacconi E."/>
            <person name="Takagi T."/>
            <person name="Takahashi H."/>
            <person name="Takemaru K."/>
            <person name="Takeuchi M."/>
            <person name="Tamakoshi A."/>
            <person name="Tanaka T."/>
            <person name="Terpstra P."/>
            <person name="Tognoni A."/>
            <person name="Tosato V."/>
            <person name="Uchiyama S."/>
            <person name="Vandenbol M."/>
            <person name="Vannier F."/>
            <person name="Vassarotti A."/>
            <person name="Viari A."/>
            <person name="Wambutt R."/>
            <person name="Wedler E."/>
            <person name="Wedler H."/>
            <person name="Weitzenegger T."/>
            <person name="Winters P."/>
            <person name="Wipat A."/>
            <person name="Yamamoto H."/>
            <person name="Yamane K."/>
            <person name="Yasumoto K."/>
            <person name="Yata K."/>
            <person name="Yoshida K."/>
            <person name="Yoshikawa H.-F."/>
            <person name="Zumstein E."/>
            <person name="Yoshikawa H."/>
            <person name="Danchin A."/>
        </authorList>
    </citation>
    <scope>NUCLEOTIDE SEQUENCE [LARGE SCALE GENOMIC DNA]</scope>
    <source>
        <strain>168</strain>
    </source>
</reference>
<reference key="3">
    <citation type="journal article" date="2021" name="Redox Biol.">
        <title>The Bacillus subtilis monothiol bacilliredoxin BrxC (YtxJ) and the Bdr (YpdA) disulfide reductase reduce S-bacillithiolated proteins.</title>
        <authorList>
            <person name="Gaballa A."/>
            <person name="Su T.T."/>
            <person name="Helmann J.D."/>
        </authorList>
    </citation>
    <scope>INTERACTION WITH BRXC</scope>
    <scope>IDENTIFICATION BY MASS SPECTROMETRY</scope>
    <source>
        <strain evidence="3">168 / CU1065</strain>
    </source>
</reference>
<comment type="function">
    <text evidence="4">Small subunit of the glutamine-dependent carbamoyl phosphate synthetase (CPSase). CPSase catalyzes the formation of carbamoyl phosphate from the ammonia moiety of glutamine, carbonate, and phosphate donated by ATP, constituting the first step of the biosynthetic pathway leading to pyrimidine nucleotides. The large subunit (synthetase) binds the substrates ammonia (free or transferred from glutamine from the small subunit), hydrogencarbonate and ATP and carries out an ATP-coupled ligase reaction, activating hydrogencarbonate by forming carboxy phosphate which reacts with ammonia to form carbamoyl phosphate.</text>
</comment>
<comment type="catalytic activity">
    <reaction evidence="1">
        <text>hydrogencarbonate + L-glutamine + 2 ATP + H2O = carbamoyl phosphate + L-glutamate + 2 ADP + phosphate + 2 H(+)</text>
        <dbReference type="Rhea" id="RHEA:18633"/>
        <dbReference type="ChEBI" id="CHEBI:15377"/>
        <dbReference type="ChEBI" id="CHEBI:15378"/>
        <dbReference type="ChEBI" id="CHEBI:17544"/>
        <dbReference type="ChEBI" id="CHEBI:29985"/>
        <dbReference type="ChEBI" id="CHEBI:30616"/>
        <dbReference type="ChEBI" id="CHEBI:43474"/>
        <dbReference type="ChEBI" id="CHEBI:58228"/>
        <dbReference type="ChEBI" id="CHEBI:58359"/>
        <dbReference type="ChEBI" id="CHEBI:456216"/>
        <dbReference type="EC" id="6.3.5.5"/>
    </reaction>
</comment>
<comment type="catalytic activity">
    <molecule>Carbamoyl phosphate synthase pyrimidine-specific large chain</molecule>
    <reaction evidence="1">
        <text>hydrogencarbonate + NH4(+) + 2 ATP = carbamoyl phosphate + 2 ADP + phosphate + 2 H(+)</text>
        <dbReference type="Rhea" id="RHEA:18029"/>
        <dbReference type="ChEBI" id="CHEBI:15378"/>
        <dbReference type="ChEBI" id="CHEBI:17544"/>
        <dbReference type="ChEBI" id="CHEBI:28938"/>
        <dbReference type="ChEBI" id="CHEBI:30616"/>
        <dbReference type="ChEBI" id="CHEBI:43474"/>
        <dbReference type="ChEBI" id="CHEBI:58228"/>
        <dbReference type="ChEBI" id="CHEBI:456216"/>
        <dbReference type="EC" id="6.3.4.16"/>
    </reaction>
</comment>
<comment type="cofactor">
    <cofactor evidence="1">
        <name>Mg(2+)</name>
        <dbReference type="ChEBI" id="CHEBI:18420"/>
    </cofactor>
    <cofactor evidence="1">
        <name>Mn(2+)</name>
        <dbReference type="ChEBI" id="CHEBI:29035"/>
    </cofactor>
    <text evidence="1">Binds 4 Mg(2+) or Mn(2+) ions per subunit.</text>
</comment>
<comment type="pathway">
    <text evidence="1">Amino-acid biosynthesis; L-arginine biosynthesis; carbamoyl phosphate from bicarbonate: step 1/1.</text>
</comment>
<comment type="pathway">
    <text evidence="1">Pyrimidine metabolism; UMP biosynthesis via de novo pathway; (S)-dihydroorotate from bicarbonate: step 1/3.</text>
</comment>
<comment type="subunit">
    <text evidence="1 2">Composed of two chains; the small (or glutamine) chain promotes the hydrolysis of glutamine to ammonia, which is used by the large (or ammonia) chain to synthesize carbamoyl phosphate. Tetramer of heterodimers (alpha,beta)4 (By similarity). Interacts with BrxC (PubMed:33722570).</text>
</comment>
<comment type="domain">
    <text evidence="1">The large subunit is composed of 2 ATP-grasp domains that are involved in binding the 2 ATP molecules needed for carbamoyl phosphate synthesis. The N-terminal ATP-grasp domain (referred to as the carboxyphosphate synthetic component) catalyzes the ATP-dependent phosphorylation of hydrogencarbonate to carboxyphosphate and the subsequent nucleophilic attack by ammonia to form a carbamate intermediate. The C-terminal ATP-grasp domain (referred to as the carbamoyl phosphate synthetic component) then catalyzes the phosphorylation of carbamate with the second ATP to form the end product carbamoyl phosphate. The reactive and unstable enzyme intermediates are sequentially channeled from one active site to the next through the interior of the protein over a distance of at least 96 A.</text>
</comment>
<comment type="similarity">
    <text evidence="1">Belongs to the CarB family.</text>
</comment>
<feature type="chain" id="PRO_0000459178" description="Carbamoyl phosphate synthase pyrimidine-specific large chain">
    <location>
        <begin position="1"/>
        <end position="1071"/>
    </location>
</feature>
<feature type="domain" description="ATP-grasp 1" evidence="1">
    <location>
        <begin position="133"/>
        <end position="327"/>
    </location>
</feature>
<feature type="domain" description="ATP-grasp 2" evidence="1">
    <location>
        <begin position="671"/>
        <end position="861"/>
    </location>
</feature>
<feature type="domain" description="MGS-like" evidence="1">
    <location>
        <begin position="930"/>
        <end position="1071"/>
    </location>
</feature>
<feature type="region of interest" description="Carboxyphosphate synthetic domain" evidence="1">
    <location>
        <begin position="1"/>
        <end position="401"/>
    </location>
</feature>
<feature type="region of interest" description="Oligomerization domain" evidence="1">
    <location>
        <begin position="402"/>
        <end position="546"/>
    </location>
</feature>
<feature type="region of interest" description="Carbamoyl phosphate synthetic domain" evidence="1">
    <location>
        <begin position="547"/>
        <end position="929"/>
    </location>
</feature>
<feature type="region of interest" description="Allosteric domain" evidence="1">
    <location>
        <begin position="930"/>
        <end position="1071"/>
    </location>
</feature>
<feature type="binding site" evidence="1">
    <location>
        <position position="129"/>
    </location>
    <ligand>
        <name>ATP</name>
        <dbReference type="ChEBI" id="CHEBI:30616"/>
        <label>1</label>
    </ligand>
</feature>
<feature type="binding site" evidence="1">
    <location>
        <position position="169"/>
    </location>
    <ligand>
        <name>ATP</name>
        <dbReference type="ChEBI" id="CHEBI:30616"/>
        <label>1</label>
    </ligand>
</feature>
<feature type="binding site" evidence="1">
    <location>
        <position position="175"/>
    </location>
    <ligand>
        <name>ATP</name>
        <dbReference type="ChEBI" id="CHEBI:30616"/>
        <label>1</label>
    </ligand>
</feature>
<feature type="binding site" evidence="1">
    <location>
        <position position="176"/>
    </location>
    <ligand>
        <name>ATP</name>
        <dbReference type="ChEBI" id="CHEBI:30616"/>
        <label>1</label>
    </ligand>
</feature>
<feature type="binding site" evidence="1">
    <location>
        <position position="208"/>
    </location>
    <ligand>
        <name>ATP</name>
        <dbReference type="ChEBI" id="CHEBI:30616"/>
        <label>1</label>
    </ligand>
</feature>
<feature type="binding site" evidence="1">
    <location>
        <position position="210"/>
    </location>
    <ligand>
        <name>ATP</name>
        <dbReference type="ChEBI" id="CHEBI:30616"/>
        <label>1</label>
    </ligand>
</feature>
<feature type="binding site" evidence="1">
    <location>
        <position position="215"/>
    </location>
    <ligand>
        <name>ATP</name>
        <dbReference type="ChEBI" id="CHEBI:30616"/>
        <label>1</label>
    </ligand>
</feature>
<feature type="binding site" evidence="1">
    <location>
        <position position="241"/>
    </location>
    <ligand>
        <name>ATP</name>
        <dbReference type="ChEBI" id="CHEBI:30616"/>
        <label>1</label>
    </ligand>
</feature>
<feature type="binding site" evidence="1">
    <location>
        <position position="242"/>
    </location>
    <ligand>
        <name>ATP</name>
        <dbReference type="ChEBI" id="CHEBI:30616"/>
        <label>1</label>
    </ligand>
</feature>
<feature type="binding site" evidence="1">
    <location>
        <position position="243"/>
    </location>
    <ligand>
        <name>ATP</name>
        <dbReference type="ChEBI" id="CHEBI:30616"/>
        <label>1</label>
    </ligand>
</feature>
<feature type="binding site" evidence="1">
    <location>
        <position position="284"/>
    </location>
    <ligand>
        <name>ATP</name>
        <dbReference type="ChEBI" id="CHEBI:30616"/>
        <label>1</label>
    </ligand>
</feature>
<feature type="binding site" evidence="1">
    <location>
        <position position="284"/>
    </location>
    <ligand>
        <name>Mg(2+)</name>
        <dbReference type="ChEBI" id="CHEBI:18420"/>
        <label>1</label>
    </ligand>
</feature>
<feature type="binding site" evidence="1">
    <location>
        <position position="284"/>
    </location>
    <ligand>
        <name>Mn(2+)</name>
        <dbReference type="ChEBI" id="CHEBI:29035"/>
        <label>1</label>
    </ligand>
</feature>
<feature type="binding site" evidence="1">
    <location>
        <position position="298"/>
    </location>
    <ligand>
        <name>ATP</name>
        <dbReference type="ChEBI" id="CHEBI:30616"/>
        <label>1</label>
    </ligand>
</feature>
<feature type="binding site" evidence="1">
    <location>
        <position position="298"/>
    </location>
    <ligand>
        <name>Mg(2+)</name>
        <dbReference type="ChEBI" id="CHEBI:18420"/>
        <label>1</label>
    </ligand>
</feature>
<feature type="binding site" evidence="1">
    <location>
        <position position="298"/>
    </location>
    <ligand>
        <name>Mg(2+)</name>
        <dbReference type="ChEBI" id="CHEBI:18420"/>
        <label>2</label>
    </ligand>
</feature>
<feature type="binding site" evidence="1">
    <location>
        <position position="298"/>
    </location>
    <ligand>
        <name>Mn(2+)</name>
        <dbReference type="ChEBI" id="CHEBI:29035"/>
        <label>1</label>
    </ligand>
</feature>
<feature type="binding site" evidence="1">
    <location>
        <position position="298"/>
    </location>
    <ligand>
        <name>Mn(2+)</name>
        <dbReference type="ChEBI" id="CHEBI:29035"/>
        <label>2</label>
    </ligand>
</feature>
<feature type="binding site" evidence="1">
    <location>
        <position position="300"/>
    </location>
    <ligand>
        <name>Mg(2+)</name>
        <dbReference type="ChEBI" id="CHEBI:18420"/>
        <label>2</label>
    </ligand>
</feature>
<feature type="binding site" evidence="1">
    <location>
        <position position="300"/>
    </location>
    <ligand>
        <name>Mn(2+)</name>
        <dbReference type="ChEBI" id="CHEBI:29035"/>
        <label>2</label>
    </ligand>
</feature>
<feature type="binding site" evidence="1">
    <location>
        <position position="707"/>
    </location>
    <ligand>
        <name>ATP</name>
        <dbReference type="ChEBI" id="CHEBI:30616"/>
        <label>2</label>
    </ligand>
</feature>
<feature type="binding site" evidence="1">
    <location>
        <position position="746"/>
    </location>
    <ligand>
        <name>ATP</name>
        <dbReference type="ChEBI" id="CHEBI:30616"/>
        <label>2</label>
    </ligand>
</feature>
<feature type="binding site" evidence="1">
    <location>
        <position position="748"/>
    </location>
    <ligand>
        <name>ATP</name>
        <dbReference type="ChEBI" id="CHEBI:30616"/>
        <label>2</label>
    </ligand>
</feature>
<feature type="binding site" evidence="1">
    <location>
        <position position="752"/>
    </location>
    <ligand>
        <name>ATP</name>
        <dbReference type="ChEBI" id="CHEBI:30616"/>
        <label>2</label>
    </ligand>
</feature>
<feature type="binding site" evidence="1">
    <location>
        <position position="777"/>
    </location>
    <ligand>
        <name>ATP</name>
        <dbReference type="ChEBI" id="CHEBI:30616"/>
        <label>2</label>
    </ligand>
</feature>
<feature type="binding site" evidence="1">
    <location>
        <position position="778"/>
    </location>
    <ligand>
        <name>ATP</name>
        <dbReference type="ChEBI" id="CHEBI:30616"/>
        <label>2</label>
    </ligand>
</feature>
<feature type="binding site" evidence="1">
    <location>
        <position position="779"/>
    </location>
    <ligand>
        <name>ATP</name>
        <dbReference type="ChEBI" id="CHEBI:30616"/>
        <label>2</label>
    </ligand>
</feature>
<feature type="binding site" evidence="1">
    <location>
        <position position="780"/>
    </location>
    <ligand>
        <name>ATP</name>
        <dbReference type="ChEBI" id="CHEBI:30616"/>
        <label>2</label>
    </ligand>
</feature>
<feature type="binding site" evidence="1">
    <location>
        <position position="820"/>
    </location>
    <ligand>
        <name>ATP</name>
        <dbReference type="ChEBI" id="CHEBI:30616"/>
        <label>2</label>
    </ligand>
</feature>
<feature type="binding site" evidence="1">
    <location>
        <position position="820"/>
    </location>
    <ligand>
        <name>Mg(2+)</name>
        <dbReference type="ChEBI" id="CHEBI:18420"/>
        <label>3</label>
    </ligand>
</feature>
<feature type="binding site" evidence="1">
    <location>
        <position position="820"/>
    </location>
    <ligand>
        <name>Mn(2+)</name>
        <dbReference type="ChEBI" id="CHEBI:29035"/>
        <label>3</label>
    </ligand>
</feature>
<feature type="binding site" evidence="1">
    <location>
        <position position="832"/>
    </location>
    <ligand>
        <name>ATP</name>
        <dbReference type="ChEBI" id="CHEBI:30616"/>
        <label>2</label>
    </ligand>
</feature>
<feature type="binding site" evidence="1">
    <location>
        <position position="832"/>
    </location>
    <ligand>
        <name>Mg(2+)</name>
        <dbReference type="ChEBI" id="CHEBI:18420"/>
        <label>3</label>
    </ligand>
</feature>
<feature type="binding site" evidence="1">
    <location>
        <position position="832"/>
    </location>
    <ligand>
        <name>Mg(2+)</name>
        <dbReference type="ChEBI" id="CHEBI:18420"/>
        <label>4</label>
    </ligand>
</feature>
<feature type="binding site" evidence="1">
    <location>
        <position position="832"/>
    </location>
    <ligand>
        <name>Mn(2+)</name>
        <dbReference type="ChEBI" id="CHEBI:29035"/>
        <label>3</label>
    </ligand>
</feature>
<feature type="binding site" evidence="1">
    <location>
        <position position="832"/>
    </location>
    <ligand>
        <name>Mn(2+)</name>
        <dbReference type="ChEBI" id="CHEBI:29035"/>
        <label>4</label>
    </ligand>
</feature>
<feature type="binding site" evidence="1">
    <location>
        <position position="834"/>
    </location>
    <ligand>
        <name>Mg(2+)</name>
        <dbReference type="ChEBI" id="CHEBI:18420"/>
        <label>4</label>
    </ligand>
</feature>
<feature type="binding site" evidence="1">
    <location>
        <position position="834"/>
    </location>
    <ligand>
        <name>Mn(2+)</name>
        <dbReference type="ChEBI" id="CHEBI:29035"/>
        <label>4</label>
    </ligand>
</feature>
<name>CARB_BACSU</name>
<sequence>MPKRVDINKILVIGSGPIIIGQAAEFDYAGTQACLALKEEGYEVILVNSNPATIMTDTEMADRVYIEPLTPEFLTRIIRKERPDAILPTLGGQTGLNLAVELSERGVLAECGVEVLGTKLSAIQQAEDRDLFRTLMNELNEPVPESEIIHSLEEAEKFVSQIGFPVIVRPAYTLGGTGGGICSNETELKEIVENGLKLSPVHQCLLEKSIAGYKEIEYEVMRDSQDHAIVVCNMENIDPVGIHTGDSIVVAPSQTLSDREYQLLRNVSLKLIRALGIEGGCNVQLALDPDSFQYYIIEVNPRVSRSSALASKATGYPIAKLAAKIAVGLSLDEMMNPVTGKTYAAFEPALDYVVSKIPRWPFDKFESANRKLGTQMKATGEVMAIGRTLEESLLKAVRSLEADVYHLELKDAADISDELLEKRIKKAGDERLFYLAEAYRRGYTVEDLHEFSAIDVFFLHKLFGIVQFEKELKANAGDTDVLRRAKELGFSDQYISREWKMKESELYSLRKQAGIAPVFKMVDTCAAEFESETPYFYSTYEEENESVVTDKKSVMVLGSGPIRIGQGVEFDYATVHSVWAIKQAGYEAIIVNNNPETVSTDFSISDKLYFEPLTIEDVMHIIDLEQPMGVVVQFGGQTAINLADELSARGVKILGTSLEDLDRAEDRDKFEQALGELGVPQPLGKTATSVNQAVSIASDIGYPVLVRPSYVLGGRAMEIVYHEEELLHYMKNAVKINPQHPVLIDRYLTGKEIEVDAVSDGETVVIPGIMEHIERAGVHSGDSIAVYPPQSLTEDIKKKIEQYTIALAKGLNIVGLLNIQFVLSQGEVYVLEVNPRSSRTVPFLSKITGIPMANLATKIILGQKLAAFGYTEGLQPEQQGVFVKAPVFSFAKLRRVDITLGPEMKSTGEVMGKDSTLEKALYKALIASGIQIPNYGSVLLTVADKDKEEGLAIAKRFHAIGYNILATEGTAGYLKEASIPAKVVGKIGQDGPNLLDVIRNGEAQFVINTLTKGKQPARDGFRIRRESVENGVACLTSLDTAEAILRVLESMTFRADQMPAVNTNQEAAVTI</sequence>
<organism>
    <name type="scientific">Bacillus subtilis (strain 168)</name>
    <dbReference type="NCBI Taxonomy" id="224308"/>
    <lineage>
        <taxon>Bacteria</taxon>
        <taxon>Bacillati</taxon>
        <taxon>Bacillota</taxon>
        <taxon>Bacilli</taxon>
        <taxon>Bacillales</taxon>
        <taxon>Bacillaceae</taxon>
        <taxon>Bacillus</taxon>
    </lineage>
</organism>
<protein>
    <recommendedName>
        <fullName evidence="4">Carbamoyl phosphate synthase pyrimidine-specific large chain</fullName>
        <ecNumber evidence="1">6.3.4.16</ecNumber>
        <ecNumber evidence="1">6.3.5.5</ecNumber>
    </recommendedName>
    <alternativeName>
        <fullName evidence="1">Carbamoyl phosphate synthetase ammonia chain</fullName>
    </alternativeName>
</protein>